<evidence type="ECO:0000255" key="1">
    <source>
        <dbReference type="HAMAP-Rule" id="MF_00406"/>
    </source>
</evidence>
<gene>
    <name evidence="1" type="primary">fabZ</name>
    <name type="ordered locus">Bcer98_3797</name>
</gene>
<dbReference type="EC" id="4.2.1.59" evidence="1"/>
<dbReference type="EMBL" id="CP000764">
    <property type="protein sequence ID" value="ABS23987.1"/>
    <property type="molecule type" value="Genomic_DNA"/>
</dbReference>
<dbReference type="RefSeq" id="WP_012096245.1">
    <property type="nucleotide sequence ID" value="NC_009674.1"/>
</dbReference>
<dbReference type="SMR" id="A7GV29"/>
<dbReference type="STRING" id="315749.Bcer98_3797"/>
<dbReference type="GeneID" id="33899039"/>
<dbReference type="KEGG" id="bcy:Bcer98_3797"/>
<dbReference type="eggNOG" id="COG0764">
    <property type="taxonomic scope" value="Bacteria"/>
</dbReference>
<dbReference type="HOGENOM" id="CLU_078912_3_0_9"/>
<dbReference type="OrthoDB" id="9772788at2"/>
<dbReference type="Proteomes" id="UP000002300">
    <property type="component" value="Chromosome"/>
</dbReference>
<dbReference type="GO" id="GO:0005737">
    <property type="term" value="C:cytoplasm"/>
    <property type="evidence" value="ECO:0007669"/>
    <property type="project" value="UniProtKB-SubCell"/>
</dbReference>
<dbReference type="GO" id="GO:0016020">
    <property type="term" value="C:membrane"/>
    <property type="evidence" value="ECO:0007669"/>
    <property type="project" value="GOC"/>
</dbReference>
<dbReference type="GO" id="GO:0019171">
    <property type="term" value="F:(3R)-hydroxyacyl-[acyl-carrier-protein] dehydratase activity"/>
    <property type="evidence" value="ECO:0007669"/>
    <property type="project" value="UniProtKB-EC"/>
</dbReference>
<dbReference type="GO" id="GO:0006633">
    <property type="term" value="P:fatty acid biosynthetic process"/>
    <property type="evidence" value="ECO:0007669"/>
    <property type="project" value="UniProtKB-UniRule"/>
</dbReference>
<dbReference type="GO" id="GO:0009245">
    <property type="term" value="P:lipid A biosynthetic process"/>
    <property type="evidence" value="ECO:0007669"/>
    <property type="project" value="UniProtKB-UniRule"/>
</dbReference>
<dbReference type="CDD" id="cd01288">
    <property type="entry name" value="FabZ"/>
    <property type="match status" value="1"/>
</dbReference>
<dbReference type="FunFam" id="3.10.129.10:FF:000001">
    <property type="entry name" value="3-hydroxyacyl-[acyl-carrier-protein] dehydratase FabZ"/>
    <property type="match status" value="1"/>
</dbReference>
<dbReference type="Gene3D" id="3.10.129.10">
    <property type="entry name" value="Hotdog Thioesterase"/>
    <property type="match status" value="1"/>
</dbReference>
<dbReference type="HAMAP" id="MF_00406">
    <property type="entry name" value="FabZ"/>
    <property type="match status" value="1"/>
</dbReference>
<dbReference type="InterPro" id="IPR013114">
    <property type="entry name" value="FabA_FabZ"/>
</dbReference>
<dbReference type="InterPro" id="IPR010084">
    <property type="entry name" value="FabZ"/>
</dbReference>
<dbReference type="InterPro" id="IPR029069">
    <property type="entry name" value="HotDog_dom_sf"/>
</dbReference>
<dbReference type="NCBIfam" id="TIGR01750">
    <property type="entry name" value="fabZ"/>
    <property type="match status" value="1"/>
</dbReference>
<dbReference type="NCBIfam" id="NF000582">
    <property type="entry name" value="PRK00006.1"/>
    <property type="match status" value="1"/>
</dbReference>
<dbReference type="PANTHER" id="PTHR30272">
    <property type="entry name" value="3-HYDROXYACYL-[ACYL-CARRIER-PROTEIN] DEHYDRATASE"/>
    <property type="match status" value="1"/>
</dbReference>
<dbReference type="PANTHER" id="PTHR30272:SF1">
    <property type="entry name" value="3-HYDROXYACYL-[ACYL-CARRIER-PROTEIN] DEHYDRATASE"/>
    <property type="match status" value="1"/>
</dbReference>
<dbReference type="Pfam" id="PF07977">
    <property type="entry name" value="FabA"/>
    <property type="match status" value="1"/>
</dbReference>
<dbReference type="SUPFAM" id="SSF54637">
    <property type="entry name" value="Thioesterase/thiol ester dehydrase-isomerase"/>
    <property type="match status" value="1"/>
</dbReference>
<name>FABZ_BACCN</name>
<reference key="1">
    <citation type="journal article" date="2008" name="Chem. Biol. Interact.">
        <title>Extending the Bacillus cereus group genomics to putative food-borne pathogens of different toxicity.</title>
        <authorList>
            <person name="Lapidus A."/>
            <person name="Goltsman E."/>
            <person name="Auger S."/>
            <person name="Galleron N."/>
            <person name="Segurens B."/>
            <person name="Dossat C."/>
            <person name="Land M.L."/>
            <person name="Broussolle V."/>
            <person name="Brillard J."/>
            <person name="Guinebretiere M.-H."/>
            <person name="Sanchis V."/>
            <person name="Nguen-the C."/>
            <person name="Lereclus D."/>
            <person name="Richardson P."/>
            <person name="Wincker P."/>
            <person name="Weissenbach J."/>
            <person name="Ehrlich S.D."/>
            <person name="Sorokin A."/>
        </authorList>
    </citation>
    <scope>NUCLEOTIDE SEQUENCE [LARGE SCALE GENOMIC DNA]</scope>
    <source>
        <strain>DSM 22905 / CIP 110041 / 391-98 / NVH 391-98</strain>
    </source>
</reference>
<accession>A7GV29</accession>
<sequence length="144" mass="16041">MLNIEQIKEIIPHRYPFLLVDQVLEVEEGKRAVGIKNVSANEEFFNGHFPEYAVMPGVLIVEALAQVGAIAILKKEENRGRLAFFGGIDHCRFKKQVRPGDQLRLEVELTRVRGPIGKGKAVATVDGEIVCEAEITFALGEKKE</sequence>
<keyword id="KW-0963">Cytoplasm</keyword>
<keyword id="KW-0441">Lipid A biosynthesis</keyword>
<keyword id="KW-0444">Lipid biosynthesis</keyword>
<keyword id="KW-0443">Lipid metabolism</keyword>
<keyword id="KW-0456">Lyase</keyword>
<comment type="function">
    <text evidence="1">Involved in unsaturated fatty acids biosynthesis. Catalyzes the dehydration of short chain beta-hydroxyacyl-ACPs and long chain saturated and unsaturated beta-hydroxyacyl-ACPs.</text>
</comment>
<comment type="catalytic activity">
    <reaction evidence="1">
        <text>a (3R)-hydroxyacyl-[ACP] = a (2E)-enoyl-[ACP] + H2O</text>
        <dbReference type="Rhea" id="RHEA:13097"/>
        <dbReference type="Rhea" id="RHEA-COMP:9925"/>
        <dbReference type="Rhea" id="RHEA-COMP:9945"/>
        <dbReference type="ChEBI" id="CHEBI:15377"/>
        <dbReference type="ChEBI" id="CHEBI:78784"/>
        <dbReference type="ChEBI" id="CHEBI:78827"/>
        <dbReference type="EC" id="4.2.1.59"/>
    </reaction>
</comment>
<comment type="subcellular location">
    <subcellularLocation>
        <location evidence="1">Cytoplasm</location>
    </subcellularLocation>
</comment>
<comment type="similarity">
    <text evidence="1">Belongs to the thioester dehydratase family. FabZ subfamily.</text>
</comment>
<organism>
    <name type="scientific">Bacillus cytotoxicus (strain DSM 22905 / CIP 110041 / 391-98 / NVH 391-98)</name>
    <dbReference type="NCBI Taxonomy" id="315749"/>
    <lineage>
        <taxon>Bacteria</taxon>
        <taxon>Bacillati</taxon>
        <taxon>Bacillota</taxon>
        <taxon>Bacilli</taxon>
        <taxon>Bacillales</taxon>
        <taxon>Bacillaceae</taxon>
        <taxon>Bacillus</taxon>
        <taxon>Bacillus cereus group</taxon>
    </lineage>
</organism>
<protein>
    <recommendedName>
        <fullName evidence="1">3-hydroxyacyl-[acyl-carrier-protein] dehydratase FabZ</fullName>
        <ecNumber evidence="1">4.2.1.59</ecNumber>
    </recommendedName>
    <alternativeName>
        <fullName evidence="1">(3R)-hydroxymyristoyl-[acyl-carrier-protein] dehydratase</fullName>
        <shortName evidence="1">(3R)-hydroxymyristoyl-ACP dehydrase</shortName>
    </alternativeName>
    <alternativeName>
        <fullName evidence="1">Beta-hydroxyacyl-ACP dehydratase</fullName>
    </alternativeName>
</protein>
<proteinExistence type="inferred from homology"/>
<feature type="chain" id="PRO_1000080432" description="3-hydroxyacyl-[acyl-carrier-protein] dehydratase FabZ">
    <location>
        <begin position="1"/>
        <end position="144"/>
    </location>
</feature>
<feature type="active site" evidence="1">
    <location>
        <position position="48"/>
    </location>
</feature>